<sequence length="165" mass="18934">MDPVNFIKTYAPRGSIIFINYTMSLTSHLNPSIEKHVGIYYGTLLSEHLVVESTYRKGVQIVPLDSFFEGYLSAKVYMLENIQVMKIAADTSLTLLGIPYGFGHNRMYCFKLVAECYKNAGINTSSKRILGKDIFLSQNFTDDNRWIKIYDSNNLTFWQIDYLKG</sequence>
<feature type="chain" id="PRO_0000099535" description="Protein OPG091">
    <location>
        <begin position="1"/>
        <end position="165"/>
    </location>
</feature>
<accession>P0DOU3</accession>
<accession>P32996</accession>
<name>PG091_VAR67</name>
<comment type="function">
    <text evidence="1">Contributes to virulence in host but not to replication in cell culture.</text>
</comment>
<comment type="subcellular location">
    <subcellularLocation>
        <location evidence="1">Virion</location>
    </subcellularLocation>
    <subcellularLocation>
        <location evidence="1">Host cytoplasm</location>
    </subcellularLocation>
    <text evidence="1">Localized to the interior of virions, primarily between the membrane and core.</text>
</comment>
<comment type="miscellaneous">
    <text evidence="1">Displays sequence similarity with a group of bacterial permuted NlpC/P60 proteins. Thus, the ancestor of the OPG091 gene might have been acquired from a bacterial source at the onset of poxvirus evolution.</text>
</comment>
<comment type="similarity">
    <text evidence="2">Belongs to the orthopoxvirus OPG091 family.</text>
</comment>
<organism>
    <name type="scientific">Variola virus (isolate Human/India/Ind3/1967)</name>
    <name type="common">VARV</name>
    <name type="synonym">Smallpox virus</name>
    <dbReference type="NCBI Taxonomy" id="587200"/>
    <lineage>
        <taxon>Viruses</taxon>
        <taxon>Varidnaviria</taxon>
        <taxon>Bamfordvirae</taxon>
        <taxon>Nucleocytoviricota</taxon>
        <taxon>Pokkesviricetes</taxon>
        <taxon>Chitovirales</taxon>
        <taxon>Poxviridae</taxon>
        <taxon>Chordopoxvirinae</taxon>
        <taxon>Orthopoxvirus</taxon>
        <taxon>Variola virus</taxon>
    </lineage>
</organism>
<reference key="1">
    <citation type="journal article" date="1993" name="Virus Res.">
        <title>Analysis of the nucleotide sequence of a 43 kbp segment of the genome of variola virus India-1967 strain.</title>
        <authorList>
            <person name="Shchelkunov S.N."/>
            <person name="Blinov V.M."/>
            <person name="Resenchuk S.M."/>
            <person name="Totmenin A.V."/>
            <person name="Sandakhchiev L.S."/>
        </authorList>
    </citation>
    <scope>NUCLEOTIDE SEQUENCE [GENOMIC DNA]</scope>
</reference>
<reference key="2">
    <citation type="journal article" date="1993" name="Virus Res.">
        <title>Nucleotide sequence analysis of variola virus HindIII M, L, I genome fragments.</title>
        <authorList>
            <person name="Shchelkunov S.N."/>
            <person name="Blinov V.M."/>
            <person name="Totmenin A.V."/>
            <person name="Marennikova S.S."/>
            <person name="Kolykhalov A.A."/>
            <person name="Frolov I.V."/>
            <person name="Chizhikov V.E."/>
            <person name="Gytorov V.V."/>
            <person name="Gashikov P.V."/>
            <person name="Belanov E.F."/>
            <person name="Belavin P.A."/>
            <person name="Resenchuk S.M."/>
            <person name="Andzhaparidze O.G."/>
            <person name="Sandakhchiev L.S."/>
        </authorList>
    </citation>
    <scope>NUCLEOTIDE SEQUENCE [GENOMIC DNA]</scope>
</reference>
<reference key="3">
    <citation type="journal article" date="1993" name="FEBS Lett.">
        <title>Genes of variola and vaccinia viruses necessary to overcome the host protective mechanisms.</title>
        <authorList>
            <person name="Shchelkunov S.N."/>
            <person name="Blinov V.M."/>
            <person name="Sandakhchiev L.S."/>
        </authorList>
    </citation>
    <scope>NUCLEOTIDE SEQUENCE [LARGE SCALE GENOMIC DNA]</scope>
</reference>
<evidence type="ECO:0000250" key="1">
    <source>
        <dbReference type="UniProtKB" id="Q80HW9"/>
    </source>
</evidence>
<evidence type="ECO:0000305" key="2"/>
<dbReference type="EMBL" id="X67119">
    <property type="protein sequence ID" value="CAA47568.1"/>
    <property type="molecule type" value="Genomic_DNA"/>
</dbReference>
<dbReference type="EMBL" id="X69198">
    <property type="protein sequence ID" value="CAA49010.1"/>
    <property type="molecule type" value="Genomic_DNA"/>
</dbReference>
<dbReference type="PIR" id="S33083">
    <property type="entry name" value="S33083"/>
</dbReference>
<dbReference type="SMR" id="P0DOU3"/>
<dbReference type="KEGG" id="vg:1486435"/>
<dbReference type="Proteomes" id="UP000002060">
    <property type="component" value="Segment"/>
</dbReference>
<dbReference type="GO" id="GO:0030430">
    <property type="term" value="C:host cell cytoplasm"/>
    <property type="evidence" value="ECO:0007669"/>
    <property type="project" value="UniProtKB-SubCell"/>
</dbReference>
<dbReference type="GO" id="GO:0044423">
    <property type="term" value="C:virion component"/>
    <property type="evidence" value="ECO:0007669"/>
    <property type="project" value="UniProtKB-KW"/>
</dbReference>
<dbReference type="Gene3D" id="3.90.1720.10">
    <property type="entry name" value="endopeptidase domain like (from Nostoc punctiforme)"/>
    <property type="match status" value="1"/>
</dbReference>
<dbReference type="InterPro" id="IPR038765">
    <property type="entry name" value="Papain-like_cys_pep_sf"/>
</dbReference>
<dbReference type="InterPro" id="IPR024453">
    <property type="entry name" value="Peptidase_C92"/>
</dbReference>
<dbReference type="Pfam" id="PF05708">
    <property type="entry name" value="Peptidase_C92"/>
    <property type="match status" value="1"/>
</dbReference>
<dbReference type="SUPFAM" id="SSF54001">
    <property type="entry name" value="Cysteine proteinases"/>
    <property type="match status" value="1"/>
</dbReference>
<organismHost>
    <name type="scientific">Homo sapiens</name>
    <name type="common">Human</name>
    <dbReference type="NCBI Taxonomy" id="9606"/>
</organismHost>
<keyword id="KW-1035">Host cytoplasm</keyword>
<keyword id="KW-0426">Late protein</keyword>
<keyword id="KW-1185">Reference proteome</keyword>
<keyword id="KW-0946">Virion</keyword>
<protein>
    <recommendedName>
        <fullName>Protein OPG091</fullName>
    </recommendedName>
    <alternativeName>
        <fullName>Uncharacterized protein G6</fullName>
    </alternativeName>
</protein>
<gene>
    <name type="primary">OPG091</name>
    <name type="ORF">G6R</name>
</gene>
<proteinExistence type="inferred from homology"/>